<dbReference type="EMBL" id="CP001103">
    <property type="protein sequence ID" value="AEA97102.1"/>
    <property type="molecule type" value="Genomic_DNA"/>
</dbReference>
<dbReference type="RefSeq" id="WP_012517456.1">
    <property type="nucleotide sequence ID" value="NC_011138.3"/>
</dbReference>
<dbReference type="SMR" id="B4RVT2"/>
<dbReference type="KEGG" id="amc:MADE_1004780"/>
<dbReference type="HOGENOM" id="CLU_079503_1_0_6"/>
<dbReference type="Proteomes" id="UP000001870">
    <property type="component" value="Chromosome"/>
</dbReference>
<dbReference type="GO" id="GO:0005886">
    <property type="term" value="C:plasma membrane"/>
    <property type="evidence" value="ECO:0007669"/>
    <property type="project" value="UniProtKB-SubCell"/>
</dbReference>
<dbReference type="GO" id="GO:0020037">
    <property type="term" value="F:heme binding"/>
    <property type="evidence" value="ECO:0007669"/>
    <property type="project" value="InterPro"/>
</dbReference>
<dbReference type="GO" id="GO:0046872">
    <property type="term" value="F:metal ion binding"/>
    <property type="evidence" value="ECO:0007669"/>
    <property type="project" value="UniProtKB-KW"/>
</dbReference>
<dbReference type="GO" id="GO:0017004">
    <property type="term" value="P:cytochrome complex assembly"/>
    <property type="evidence" value="ECO:0007669"/>
    <property type="project" value="UniProtKB-KW"/>
</dbReference>
<dbReference type="FunFam" id="2.40.50.140:FF:000104">
    <property type="entry name" value="Cytochrome c-type biogenesis protein CcmE"/>
    <property type="match status" value="1"/>
</dbReference>
<dbReference type="Gene3D" id="2.40.50.140">
    <property type="entry name" value="Nucleic acid-binding proteins"/>
    <property type="match status" value="1"/>
</dbReference>
<dbReference type="HAMAP" id="MF_01959">
    <property type="entry name" value="CcmE"/>
    <property type="match status" value="1"/>
</dbReference>
<dbReference type="InterPro" id="IPR004329">
    <property type="entry name" value="CcmE"/>
</dbReference>
<dbReference type="InterPro" id="IPR036127">
    <property type="entry name" value="CcmE-like_sf"/>
</dbReference>
<dbReference type="InterPro" id="IPR012340">
    <property type="entry name" value="NA-bd_OB-fold"/>
</dbReference>
<dbReference type="NCBIfam" id="NF009638">
    <property type="entry name" value="PRK13165.1"/>
    <property type="match status" value="1"/>
</dbReference>
<dbReference type="NCBIfam" id="NF009727">
    <property type="entry name" value="PRK13254.1-1"/>
    <property type="match status" value="1"/>
</dbReference>
<dbReference type="NCBIfam" id="NF009729">
    <property type="entry name" value="PRK13254.1-3"/>
    <property type="match status" value="1"/>
</dbReference>
<dbReference type="NCBIfam" id="NF009731">
    <property type="entry name" value="PRK13254.1-5"/>
    <property type="match status" value="1"/>
</dbReference>
<dbReference type="PANTHER" id="PTHR34128">
    <property type="entry name" value="CYTOCHROME C-TYPE BIOGENESIS PROTEIN CCME HOMOLOG, MITOCHONDRIAL"/>
    <property type="match status" value="1"/>
</dbReference>
<dbReference type="PANTHER" id="PTHR34128:SF2">
    <property type="entry name" value="CYTOCHROME C-TYPE BIOGENESIS PROTEIN CCME HOMOLOG, MITOCHONDRIAL"/>
    <property type="match status" value="1"/>
</dbReference>
<dbReference type="Pfam" id="PF03100">
    <property type="entry name" value="CcmE"/>
    <property type="match status" value="1"/>
</dbReference>
<dbReference type="SUPFAM" id="SSF82093">
    <property type="entry name" value="Heme chaperone CcmE"/>
    <property type="match status" value="1"/>
</dbReference>
<evidence type="ECO:0000255" key="1">
    <source>
        <dbReference type="HAMAP-Rule" id="MF_01959"/>
    </source>
</evidence>
<evidence type="ECO:0000256" key="2">
    <source>
        <dbReference type="SAM" id="MobiDB-lite"/>
    </source>
</evidence>
<reference key="1">
    <citation type="journal article" date="2008" name="ISME J.">
        <title>Comparative genomics of two ecotypes of the marine planktonic copiotroph Alteromonas macleodii suggests alternative lifestyles associated with different kinds of particulate organic matter.</title>
        <authorList>
            <person name="Ivars-Martinez E."/>
            <person name="Martin-Cuadrado A.-B."/>
            <person name="D'Auria G."/>
            <person name="Mira A."/>
            <person name="Ferriera S."/>
            <person name="Johnson J."/>
            <person name="Friedman R."/>
            <person name="Rodriguez-Valera F."/>
        </authorList>
    </citation>
    <scope>NUCLEOTIDE SEQUENCE [LARGE SCALE GENOMIC DNA]</scope>
    <source>
        <strain>DSM 17117 / CIP 110805 / LMG 28347 / Deep ecotype</strain>
    </source>
</reference>
<keyword id="KW-0997">Cell inner membrane</keyword>
<keyword id="KW-1003">Cell membrane</keyword>
<keyword id="KW-0201">Cytochrome c-type biogenesis</keyword>
<keyword id="KW-0349">Heme</keyword>
<keyword id="KW-0408">Iron</keyword>
<keyword id="KW-0472">Membrane</keyword>
<keyword id="KW-0479">Metal-binding</keyword>
<keyword id="KW-0735">Signal-anchor</keyword>
<keyword id="KW-0812">Transmembrane</keyword>
<keyword id="KW-1133">Transmembrane helix</keyword>
<comment type="function">
    <text evidence="1">Heme chaperone required for the biogenesis of c-type cytochromes. Transiently binds heme delivered by CcmC and transfers the heme to apo-cytochromes in a process facilitated by CcmF and CcmH.</text>
</comment>
<comment type="subcellular location">
    <subcellularLocation>
        <location evidence="1">Cell inner membrane</location>
        <topology evidence="1">Single-pass type II membrane protein</topology>
        <orientation evidence="1">Periplasmic side</orientation>
    </subcellularLocation>
</comment>
<comment type="similarity">
    <text evidence="1">Belongs to the CcmE/CycJ family.</text>
</comment>
<gene>
    <name evidence="1" type="primary">ccmE</name>
    <name evidence="1" type="synonym">cycJ</name>
    <name type="ordered locus">MADE_1004780</name>
</gene>
<proteinExistence type="inferred from homology"/>
<name>CCME_ALTMD</name>
<feature type="chain" id="PRO_1000189002" description="Cytochrome c-type biogenesis protein CcmE">
    <location>
        <begin position="1"/>
        <end position="164"/>
    </location>
</feature>
<feature type="topological domain" description="Cytoplasmic" evidence="1">
    <location>
        <begin position="1"/>
        <end position="8"/>
    </location>
</feature>
<feature type="transmembrane region" description="Helical; Signal-anchor for type II membrane protein" evidence="1">
    <location>
        <begin position="9"/>
        <end position="29"/>
    </location>
</feature>
<feature type="topological domain" description="Periplasmic" evidence="1">
    <location>
        <begin position="30"/>
        <end position="164"/>
    </location>
</feature>
<feature type="region of interest" description="Disordered" evidence="2">
    <location>
        <begin position="142"/>
        <end position="164"/>
    </location>
</feature>
<feature type="compositionally biased region" description="Polar residues" evidence="2">
    <location>
        <begin position="154"/>
        <end position="164"/>
    </location>
</feature>
<feature type="binding site" description="covalent" evidence="1">
    <location>
        <position position="128"/>
    </location>
    <ligand>
        <name>heme</name>
        <dbReference type="ChEBI" id="CHEBI:30413"/>
    </ligand>
</feature>
<feature type="binding site" description="axial binding residue" evidence="1">
    <location>
        <position position="132"/>
    </location>
    <ligand>
        <name>heme</name>
        <dbReference type="ChEBI" id="CHEBI:30413"/>
    </ligand>
    <ligandPart>
        <name>Fe</name>
        <dbReference type="ChEBI" id="CHEBI:18248"/>
    </ligandPart>
</feature>
<protein>
    <recommendedName>
        <fullName evidence="1">Cytochrome c-type biogenesis protein CcmE</fullName>
    </recommendedName>
    <alternativeName>
        <fullName evidence="1">Cytochrome c maturation protein E</fullName>
    </alternativeName>
    <alternativeName>
        <fullName evidence="1">Heme chaperone CcmE</fullName>
    </alternativeName>
</protein>
<accession>B4RVT2</accession>
<accession>F2GBV1</accession>
<sequence length="164" mass="17658">MNPRRKQRLAVVGIIGFLIVSAVGLMLYALNDSIDLFYTPSEIIEGKNGQKPQIGQRLRIGGMVVPGSVSRDSESLAVSFDLIDTGPTVTVTYTGILPDLFREGQGIVATGVLTDVGAIKAQEVLAKHDEEYMPPELAEKMKGIKHVKPENMPTYESSNGAGSK</sequence>
<organism>
    <name type="scientific">Alteromonas mediterranea (strain DSM 17117 / CIP 110805 / LMG 28347 / Deep ecotype)</name>
    <dbReference type="NCBI Taxonomy" id="1774373"/>
    <lineage>
        <taxon>Bacteria</taxon>
        <taxon>Pseudomonadati</taxon>
        <taxon>Pseudomonadota</taxon>
        <taxon>Gammaproteobacteria</taxon>
        <taxon>Alteromonadales</taxon>
        <taxon>Alteromonadaceae</taxon>
        <taxon>Alteromonas/Salinimonas group</taxon>
        <taxon>Alteromonas</taxon>
    </lineage>
</organism>